<organism evidence="17">
    <name type="scientific">Pseudomonas aeruginosa (strain ATCC 15692 / DSM 22644 / CIP 104116 / JCM 14847 / LMG 12228 / 1C / PRS 101 / PAO1)</name>
    <dbReference type="NCBI Taxonomy" id="208964"/>
    <lineage>
        <taxon>Bacteria</taxon>
        <taxon>Pseudomonadati</taxon>
        <taxon>Pseudomonadota</taxon>
        <taxon>Gammaproteobacteria</taxon>
        <taxon>Pseudomonadales</taxon>
        <taxon>Pseudomonadaceae</taxon>
        <taxon>Pseudomonas</taxon>
    </lineage>
</organism>
<accession>Q9HUT5</accession>
<dbReference type="EMBL" id="AE004091">
    <property type="protein sequence ID" value="AAG08263.1"/>
    <property type="molecule type" value="Genomic_DNA"/>
</dbReference>
<dbReference type="PIR" id="H83035">
    <property type="entry name" value="H83035"/>
</dbReference>
<dbReference type="RefSeq" id="NP_253565.1">
    <property type="nucleotide sequence ID" value="NC_002516.2"/>
</dbReference>
<dbReference type="RefSeq" id="WP_003095496.1">
    <property type="nucleotide sequence ID" value="NZ_QZGE01000002.1"/>
</dbReference>
<dbReference type="PDB" id="5XBI">
    <property type="method" value="X-ray"/>
    <property type="resolution" value="1.40 A"/>
    <property type="chains" value="A/B=120-270"/>
</dbReference>
<dbReference type="PDB" id="5XBT">
    <property type="method" value="X-ray"/>
    <property type="resolution" value="2.50 A"/>
    <property type="chains" value="A/B=1-270"/>
</dbReference>
<dbReference type="PDB" id="5XBW">
    <property type="method" value="X-ray"/>
    <property type="resolution" value="3.11 A"/>
    <property type="chains" value="A/B/C/D=1-270"/>
</dbReference>
<dbReference type="PDB" id="5XQL">
    <property type="method" value="X-ray"/>
    <property type="resolution" value="2.49 A"/>
    <property type="chains" value="A=1-270"/>
</dbReference>
<dbReference type="PDB" id="5YC9">
    <property type="method" value="X-ray"/>
    <property type="resolution" value="2.90 A"/>
    <property type="chains" value="A/B/C/D=1-270"/>
</dbReference>
<dbReference type="PDBsum" id="5XBI"/>
<dbReference type="PDBsum" id="5XBT"/>
<dbReference type="PDBsum" id="5XBW"/>
<dbReference type="PDBsum" id="5XQL"/>
<dbReference type="PDBsum" id="5YC9"/>
<dbReference type="SMR" id="Q9HUT5"/>
<dbReference type="STRING" id="208964.PA4878"/>
<dbReference type="PaxDb" id="208964-PA4878"/>
<dbReference type="DNASU" id="882234"/>
<dbReference type="GeneID" id="882234"/>
<dbReference type="KEGG" id="pae:PA4878"/>
<dbReference type="PATRIC" id="fig|208964.12.peg.5111"/>
<dbReference type="PseudoCAP" id="PA4878"/>
<dbReference type="HOGENOM" id="CLU_065103_2_2_6"/>
<dbReference type="InParanoid" id="Q9HUT5"/>
<dbReference type="OrthoDB" id="9808480at2"/>
<dbReference type="PhylomeDB" id="Q9HUT5"/>
<dbReference type="BioCyc" id="PAER208964:G1FZ6-4992-MONOMER"/>
<dbReference type="Proteomes" id="UP000002438">
    <property type="component" value="Chromosome"/>
</dbReference>
<dbReference type="CollecTF" id="EXPREG_00001580"/>
<dbReference type="GO" id="GO:0032993">
    <property type="term" value="C:protein-DNA complex"/>
    <property type="evidence" value="ECO:0000315"/>
    <property type="project" value="CollecTF"/>
</dbReference>
<dbReference type="GO" id="GO:0001216">
    <property type="term" value="F:DNA-binding transcription activator activity"/>
    <property type="evidence" value="ECO:0000315"/>
    <property type="project" value="CollecTF"/>
</dbReference>
<dbReference type="GO" id="GO:0003700">
    <property type="term" value="F:DNA-binding transcription factor activity"/>
    <property type="evidence" value="ECO:0000318"/>
    <property type="project" value="GO_Central"/>
</dbReference>
<dbReference type="GO" id="GO:0000166">
    <property type="term" value="F:nucleotide binding"/>
    <property type="evidence" value="ECO:0007669"/>
    <property type="project" value="UniProtKB-KW"/>
</dbReference>
<dbReference type="GO" id="GO:0000976">
    <property type="term" value="F:transcription cis-regulatory region binding"/>
    <property type="evidence" value="ECO:0000315"/>
    <property type="project" value="CollecTF"/>
</dbReference>
<dbReference type="GO" id="GO:0045892">
    <property type="term" value="P:negative regulation of DNA-templated transcription"/>
    <property type="evidence" value="ECO:0000314"/>
    <property type="project" value="PseudoCAP"/>
</dbReference>
<dbReference type="GO" id="GO:0045893">
    <property type="term" value="P:positive regulation of DNA-templated transcription"/>
    <property type="evidence" value="ECO:0000314"/>
    <property type="project" value="PseudoCAP"/>
</dbReference>
<dbReference type="GO" id="GO:0006355">
    <property type="term" value="P:regulation of DNA-templated transcription"/>
    <property type="evidence" value="ECO:0000318"/>
    <property type="project" value="GO_Central"/>
</dbReference>
<dbReference type="CDD" id="cd01107">
    <property type="entry name" value="HTH_BmrR"/>
    <property type="match status" value="1"/>
</dbReference>
<dbReference type="FunFam" id="1.10.1660.10:FF:000016">
    <property type="entry name" value="MerR family transcriptional regulator"/>
    <property type="match status" value="1"/>
</dbReference>
<dbReference type="FunFam" id="3.20.80.10:FF:000016">
    <property type="entry name" value="Probable transcriptional regulator"/>
    <property type="match status" value="1"/>
</dbReference>
<dbReference type="Gene3D" id="1.10.1660.10">
    <property type="match status" value="1"/>
</dbReference>
<dbReference type="Gene3D" id="3.20.80.10">
    <property type="entry name" value="Regulatory factor, effector binding domain"/>
    <property type="match status" value="1"/>
</dbReference>
<dbReference type="InterPro" id="IPR010499">
    <property type="entry name" value="AraC_E-bd"/>
</dbReference>
<dbReference type="InterPro" id="IPR029441">
    <property type="entry name" value="Cass2"/>
</dbReference>
<dbReference type="InterPro" id="IPR009061">
    <property type="entry name" value="DNA-bd_dom_put_sf"/>
</dbReference>
<dbReference type="InterPro" id="IPR000551">
    <property type="entry name" value="MerR-type_HTH_dom"/>
</dbReference>
<dbReference type="InterPro" id="IPR047057">
    <property type="entry name" value="MerR_fam"/>
</dbReference>
<dbReference type="InterPro" id="IPR011256">
    <property type="entry name" value="Reg_factor_effector_dom_sf"/>
</dbReference>
<dbReference type="PANTHER" id="PTHR30204:SF97">
    <property type="entry name" value="MERR FAMILY REGULATORY PROTEIN"/>
    <property type="match status" value="1"/>
</dbReference>
<dbReference type="PANTHER" id="PTHR30204">
    <property type="entry name" value="REDOX-CYCLING DRUG-SENSING TRANSCRIPTIONAL ACTIVATOR SOXR"/>
    <property type="match status" value="1"/>
</dbReference>
<dbReference type="Pfam" id="PF14526">
    <property type="entry name" value="Cass2"/>
    <property type="match status" value="1"/>
</dbReference>
<dbReference type="Pfam" id="PF13411">
    <property type="entry name" value="MerR_1"/>
    <property type="match status" value="1"/>
</dbReference>
<dbReference type="SMART" id="SM00871">
    <property type="entry name" value="AraC_E_bind"/>
    <property type="match status" value="1"/>
</dbReference>
<dbReference type="SMART" id="SM00422">
    <property type="entry name" value="HTH_MERR"/>
    <property type="match status" value="1"/>
</dbReference>
<dbReference type="SUPFAM" id="SSF55136">
    <property type="entry name" value="Probable bacterial effector-binding domain"/>
    <property type="match status" value="1"/>
</dbReference>
<dbReference type="SUPFAM" id="SSF46955">
    <property type="entry name" value="Putative DNA-binding domain"/>
    <property type="match status" value="1"/>
</dbReference>
<dbReference type="PROSITE" id="PS50937">
    <property type="entry name" value="HTH_MERR_2"/>
    <property type="match status" value="1"/>
</dbReference>
<name>BRLR_PSEAE</name>
<sequence>MLTIGQLARIFEISTKTLRHYDAIGLFVPARTGSDNGYRYYQPEQIEQLSRILALRRLDVPLEAIDRLKRDGALDDPQRLRHFLQRHQHTLREEISARQRLLAELDRTLATLAHWRIRNMHARIVERPAFSVVGMEYFGSAPGDTIGQLWERFIPREHEIAGKHDPEVSYGICAQQPNGEFHYVAGFEVQEGWPVPEGMVRFQVPAQKYAVFTHKGTAPQIAESFQAIYSHLLAERGLEPKAGVDFEYYDQRFRGPLDPNSQVDLYIPIY</sequence>
<proteinExistence type="evidence at protein level"/>
<evidence type="ECO:0000255" key="1">
    <source>
        <dbReference type="PROSITE-ProRule" id="PRU00254"/>
    </source>
</evidence>
<evidence type="ECO:0000269" key="2">
    <source>
    </source>
</evidence>
<evidence type="ECO:0000269" key="3">
    <source>
    </source>
</evidence>
<evidence type="ECO:0000269" key="4">
    <source>
    </source>
</evidence>
<evidence type="ECO:0000269" key="5">
    <source>
    </source>
</evidence>
<evidence type="ECO:0000269" key="6">
    <source>
    </source>
</evidence>
<evidence type="ECO:0000269" key="7">
    <source>
    </source>
</evidence>
<evidence type="ECO:0000303" key="8">
    <source>
    </source>
</evidence>
<evidence type="ECO:0000303" key="9">
    <source>
    </source>
</evidence>
<evidence type="ECO:0000303" key="10">
    <source>
    </source>
</evidence>
<evidence type="ECO:0000303" key="11">
    <source>
    </source>
</evidence>
<evidence type="ECO:0000303" key="12">
    <source>
    </source>
</evidence>
<evidence type="ECO:0000305" key="13"/>
<evidence type="ECO:0000305" key="14">
    <source>
    </source>
</evidence>
<evidence type="ECO:0000312" key="15">
    <source>
        <dbReference type="EMBL" id="AAG08263.1"/>
    </source>
</evidence>
<evidence type="ECO:0000312" key="16">
    <source>
        <dbReference type="PDB" id="5XBW"/>
    </source>
</evidence>
<evidence type="ECO:0000312" key="17">
    <source>
        <dbReference type="Proteomes" id="UP000002438"/>
    </source>
</evidence>
<evidence type="ECO:0007744" key="18">
    <source>
        <dbReference type="PDB" id="5XBI"/>
    </source>
</evidence>
<evidence type="ECO:0007744" key="19">
    <source>
        <dbReference type="PDB" id="5XBT"/>
    </source>
</evidence>
<evidence type="ECO:0007744" key="20">
    <source>
        <dbReference type="PDB" id="5XQL"/>
    </source>
</evidence>
<evidence type="ECO:0007744" key="21">
    <source>
        <dbReference type="PDB" id="5YC9"/>
    </source>
</evidence>
<feature type="chain" id="PRO_0000462137" description="Transcriptional regulator BrlR">
    <location>
        <begin position="1"/>
        <end position="270"/>
    </location>
</feature>
<feature type="domain" description="HTH merR-type" evidence="1">
    <location>
        <begin position="1"/>
        <end position="71"/>
    </location>
</feature>
<feature type="DNA-binding region" description="H-T-H motif" evidence="1">
    <location>
        <begin position="4"/>
        <end position="23"/>
    </location>
</feature>
<feature type="region of interest" description="Involved in effector-binding, probably including pyocyanine-binding" evidence="7 18 19">
    <location>
        <begin position="120"/>
        <end position="270"/>
    </location>
</feature>
<feature type="binding site" evidence="19">
    <location>
        <position position="1"/>
    </location>
    <ligand>
        <name>3',3'-c-di-GMP</name>
        <dbReference type="ChEBI" id="CHEBI:58805"/>
        <label>1</label>
    </ligand>
</feature>
<feature type="binding site" evidence="20">
    <location>
        <position position="1"/>
    </location>
    <ligand>
        <name>3',3'-c-di-GMP</name>
        <dbReference type="ChEBI" id="CHEBI:58805"/>
        <label>2</label>
    </ligand>
</feature>
<feature type="binding site" evidence="19">
    <location>
        <position position="31"/>
    </location>
    <ligand>
        <name>3',3'-c-di-GMP</name>
        <dbReference type="ChEBI" id="CHEBI:58805"/>
        <label>1</label>
    </ligand>
</feature>
<feature type="binding site" evidence="20">
    <location>
        <position position="31"/>
    </location>
    <ligand>
        <name>3',3'-c-di-GMP</name>
        <dbReference type="ChEBI" id="CHEBI:58805"/>
        <label>2</label>
    </ligand>
</feature>
<feature type="binding site" evidence="19">
    <location>
        <position position="34"/>
    </location>
    <ligand>
        <name>3',3'-c-di-GMP</name>
        <dbReference type="ChEBI" id="CHEBI:58805"/>
        <label>1</label>
    </ligand>
</feature>
<feature type="binding site" evidence="19">
    <location>
        <position position="35"/>
    </location>
    <ligand>
        <name>3',3'-c-di-GMP</name>
        <dbReference type="ChEBI" id="CHEBI:58805"/>
        <label>1</label>
    </ligand>
</feature>
<feature type="binding site" evidence="20">
    <location>
        <position position="35"/>
    </location>
    <ligand>
        <name>3',3'-c-di-GMP</name>
        <dbReference type="ChEBI" id="CHEBI:58805"/>
        <label>2</label>
    </ligand>
</feature>
<feature type="binding site" evidence="19">
    <location>
        <position position="40"/>
    </location>
    <ligand>
        <name>3',3'-c-di-GMP</name>
        <dbReference type="ChEBI" id="CHEBI:58805"/>
        <label>1</label>
    </ligand>
</feature>
<feature type="binding site" evidence="20">
    <location>
        <position position="40"/>
    </location>
    <ligand>
        <name>3',3'-c-di-GMP</name>
        <dbReference type="ChEBI" id="CHEBI:58805"/>
        <label>2</label>
    </ligand>
</feature>
<feature type="binding site" evidence="19 20">
    <location>
        <position position="67"/>
    </location>
    <ligand>
        <name>3',3'-c-di-GMP</name>
        <dbReference type="ChEBI" id="CHEBI:58805"/>
        <label>3</label>
    </ligand>
</feature>
<feature type="binding site" evidence="19 20">
    <location>
        <position position="70"/>
    </location>
    <ligand>
        <name>3',3'-c-di-GMP</name>
        <dbReference type="ChEBI" id="CHEBI:58805"/>
        <label>3</label>
    </ligand>
</feature>
<feature type="binding site" evidence="19 20">
    <location>
        <position position="86"/>
    </location>
    <ligand>
        <name>3',3'-c-di-GMP</name>
        <dbReference type="ChEBI" id="CHEBI:58805"/>
        <label>3</label>
    </ligand>
</feature>
<feature type="binding site" evidence="19">
    <location>
        <position position="270"/>
    </location>
    <ligand>
        <name>3',3'-c-di-GMP</name>
        <dbReference type="ChEBI" id="CHEBI:58805"/>
        <label>1</label>
    </ligand>
</feature>
<feature type="mutagenesis site" description="Reduces c-di-GMP binding. Drastically decreases DNA binding ability, but binding is still enhanced in the presence of c-di-GMP. Reduces c-di-GMP binding when associated with Ala-35, Ala-40 and Ala-270. Reduces DNA binding ability when associated with Ala-35, Ala-40 and Ala-270. Almost abolishes DNA binding ability when associated with Ala-35, Ala-40, Ala-67, Ala-86 and Ala-270. Reduces transcriptional activation of the brlR promoter when associated with Ala-35, Ala-40 and Ala-270." evidence="7">
    <original>R</original>
    <variation>A</variation>
    <location>
        <position position="31"/>
    </location>
</feature>
<feature type="mutagenesis site" description="Slightly reduces c-di-GMP binding. Reduces c-di-GMP binding when associated with Ala-31, Ala-40 and Ala-270. Slightly decreases DNA binding ability, but binding is still enhanced in the presence of c-di-GMP. Decreases DNA binding ability when associated with Ala-31, Ala-40 and Ala-270. Almost abolishes DNA binding ability when associated with Ala-31, Ala-40, Ala-67, Ala-86 and Ala-270. Reduces transcriptional activation of the brlR promoter when associated with Ala-31, Ala-40 and Ala-270." evidence="7">
    <original>D</original>
    <variation>A</variation>
    <location>
        <position position="35"/>
    </location>
</feature>
<feature type="mutagenesis site" description="Reduces c-di-GMP binding. Reduces c-di-GMP binding when associated with Ala-31, Ala-35 and Ala-270. Drastically decreases DNA binding ability, but binding is still enhanced in the presence of c-di-GMP. Drastically decreases DNA binding ability when associated with Ala-31, Ala-35 and Ala-270. Almost abolishes DNA binding ability when associated with Ala-31, Ala-35, Ala-67, Ala-86 and Ala-270. Reduces transcriptional activation of the brlR promoter when associated with Ala-31, Ala-35 and Ala-270." evidence="7">
    <original>Y</original>
    <variation>A</variation>
    <location>
        <position position="40"/>
    </location>
</feature>
<feature type="mutagenesis site" description="Slightly reduces c-di-GMP binding. Reduces c-di-GMP binding when associated with Ala-86. Slightly decreases DNA binding ability, but binding is still enhanced in the presence of c-di-GMP. Decreases DNA binding ability when associated with Ala-86. Almost abolishes DNA binding ability when associated with Ala-31, Ala-35, Ala-40, Ala-86 and Ala-270. Almost abolishes transcriptional activation of the brlR promoter when associated with Ala-86." evidence="7">
    <original>R</original>
    <variation>A</variation>
    <location>
        <position position="67"/>
    </location>
</feature>
<feature type="mutagenesis site" description="Reduces c-di-GMP binding. Reduces c-di-GMP binding when associated with Ala-67. Drastically decreases DNA binding ability, but binding is still enhanced in the presence of c-di-GMP. Decreases DNA binding ability when associated with Ala-67. Almost abolishes DNA binding ability when associated with Ala-31, Ala-35, Ala-40, Ala-67 and Ala-270. Almost abolishes transcriptional activation of the brlR promoter when associated with Ala-67." evidence="7">
    <original>R</original>
    <variation>A</variation>
    <location>
        <position position="86"/>
    </location>
</feature>
<feature type="mutagenesis site" description="Reduces c-di-GMP binding. Reduces c-di-GMP binding when associated with Ala-31, Ala-35 and Ala-40. Slightly decreases DNA binding ability, but binding is still enhanced in the presence of c-di-GMP. Decreases DNA binding ability when associated with Ala-31, Ala-35 and Ala-40. Almost abolishes DNA binding ability when associated with Ala-31, Ala-35, Ala-40, Ala-67 and Ala-86. Reduces transcriptional activation of the brlR promoter when associated with Ala-31, Ala-35, and Ala-40." evidence="7">
    <original>Y</original>
    <variation>A</variation>
    <location>
        <position position="270"/>
    </location>
</feature>
<gene>
    <name evidence="8 9 10 11" type="primary">brlR</name>
    <name evidence="11 15" type="ordered locus">PA4878</name>
</gene>
<protein>
    <recommendedName>
        <fullName evidence="13">Transcriptional regulator BrlR</fullName>
    </recommendedName>
    <alternativeName>
        <fullName evidence="13">HTH-type transcriptional regulator BrlR</fullName>
    </alternativeName>
    <alternativeName>
        <fullName evidence="14">MerR-like regulator BrlR</fullName>
    </alternativeName>
    <alternativeName>
        <fullName evidence="8">biofilm resistance locus regulator</fullName>
    </alternativeName>
</protein>
<reference evidence="17" key="1">
    <citation type="journal article" date="2000" name="Nature">
        <title>Complete genome sequence of Pseudomonas aeruginosa PAO1, an opportunistic pathogen.</title>
        <authorList>
            <person name="Stover C.K."/>
            <person name="Pham X.-Q.T."/>
            <person name="Erwin A.L."/>
            <person name="Mizoguchi S.D."/>
            <person name="Warrener P."/>
            <person name="Hickey M.J."/>
            <person name="Brinkman F.S.L."/>
            <person name="Hufnagle W.O."/>
            <person name="Kowalik D.J."/>
            <person name="Lagrou M."/>
            <person name="Garber R.L."/>
            <person name="Goltry L."/>
            <person name="Tolentino E."/>
            <person name="Westbrock-Wadman S."/>
            <person name="Yuan Y."/>
            <person name="Brody L.L."/>
            <person name="Coulter S.N."/>
            <person name="Folger K.R."/>
            <person name="Kas A."/>
            <person name="Larbig K."/>
            <person name="Lim R.M."/>
            <person name="Smith K.A."/>
            <person name="Spencer D.H."/>
            <person name="Wong G.K.-S."/>
            <person name="Wu Z."/>
            <person name="Paulsen I.T."/>
            <person name="Reizer J."/>
            <person name="Saier M.H. Jr."/>
            <person name="Hancock R.E.W."/>
            <person name="Lory S."/>
            <person name="Olson M.V."/>
        </authorList>
    </citation>
    <scope>NUCLEOTIDE SEQUENCE [LARGE SCALE GENOMIC DNA]</scope>
    <source>
        <strain evidence="17">ATCC 15692 / DSM 22644 / CIP 104116 / JCM 14847 / LMG 12228 / 1C / PRS 101 / PAO1</strain>
    </source>
</reference>
<reference key="2">
    <citation type="journal article" date="2012" name="J. Bacteriol.">
        <title>The MerR-like transcriptional regulator BrlR contributes to Pseudomonas aeruginosa biofilm tolerance.</title>
        <authorList>
            <person name="Liao J."/>
            <person name="Sauer K."/>
        </authorList>
    </citation>
    <scope>FUNCTION</scope>
    <scope>INDUCTION</scope>
    <scope>DISRUPTION PHENOTYPE</scope>
</reference>
<reference key="3">
    <citation type="journal article" date="2013" name="J. Bacteriol.">
        <title>The MerR-like regulator BrlR confers biofilm tolerance by activating multidrug efflux pumps in Pseudomonas aeruginosa biofilms.</title>
        <authorList>
            <person name="Liao J."/>
            <person name="Schurr M.J."/>
            <person name="Sauer K."/>
        </authorList>
    </citation>
    <scope>FUNCTION</scope>
    <scope>DISRUPTION PHENOTYPE</scope>
</reference>
<reference key="4">
    <citation type="journal article" date="2013" name="J. Bacteriol.">
        <title>The MerR-like regulator BrlR impairs Pseudomonas aeruginosa biofilm tolerance to colistin by repressing PhoPQ.</title>
        <authorList>
            <person name="Chambers J.R."/>
            <person name="Sauer K."/>
        </authorList>
    </citation>
    <scope>FUNCTION</scope>
    <scope>DISRUPTION PHENOTYPE</scope>
</reference>
<reference key="5">
    <citation type="journal article" date="2014" name="Mol. Microbiol.">
        <title>BrlR from Pseudomonas aeruginosa is a c-di-GMP-responsive transcription factor.</title>
        <authorList>
            <person name="Chambers J.R."/>
            <person name="Liao J."/>
            <person name="Schurr M.J."/>
            <person name="Sauer K."/>
        </authorList>
    </citation>
    <scope>FUNCTION</scope>
    <scope>SUBUNIT</scope>
    <scope>INDUCTION BY CYCLIC DI-3',5'-GUANYLATE</scope>
</reference>
<reference key="6">
    <citation type="journal article" date="2018" name="Antimicrob. Agents Chemother.">
        <title>The ABC of Biofilm Drug Tolerance: the MerR-Like Regulator BrlR Is an Activator of ABC Transport Systems, with PA1874-77 Contributing to the Tolerance of Pseudomonas aeruginosa Biofilms to Tobramycin.</title>
        <authorList>
            <person name="Poudyal B."/>
            <person name="Sauer K."/>
        </authorList>
    </citation>
    <scope>FUNCTION</scope>
    <scope>DISRUPTION PHENOTYPE</scope>
</reference>
<reference evidence="20" key="7">
    <citation type="journal article" date="2017" name="Biochem. Biophys. Res. Commun.">
        <title>Crystal structure of BrlR with c-di-GMP.</title>
        <authorList>
            <person name="Raju H."/>
            <person name="Sharma R."/>
        </authorList>
    </citation>
    <scope>X-RAY CRYSTALLOGRAPHY (2.49 ANGSTROMS) IN COMPLEX WITH CYCLIC DI-3',5'-GUANYLATE</scope>
</reference>
<reference evidence="21" key="8">
    <citation type="submission" date="2017-09" db="PDB data bank">
        <title>Crystal structure of a Pseudomonas aeruginosa transcriptional regulator.</title>
        <authorList>
            <person name="Harikiran R."/>
            <person name="Sundararajan R."/>
            <person name="Sharma R."/>
        </authorList>
    </citation>
    <scope>X-RAY CRYSTALLOGRAPHY (2.90 ANGSTROMS)</scope>
</reference>
<reference evidence="16 18 19" key="9">
    <citation type="journal article" date="2018" name="Nat. Commun.">
        <title>BrlR from Pseudomonas aeruginosa is a receptor for both cyclic di-GMP and pyocyanin.</title>
        <authorList>
            <person name="Wang F."/>
            <person name="He Q."/>
            <person name="Yin J."/>
            <person name="Xu S."/>
            <person name="Hu W."/>
            <person name="Gu L."/>
        </authorList>
    </citation>
    <scope>X-RAY CRYSTALLOGRAPHY (1.40 ANGSTROMS) OF 120-270 IN APO-FORM AND IN COMPLEXES WITH CYCLIC DI-3',5'-GUANYLATE AND PYOCYANINE ANALOG</scope>
    <scope>FUNCTION</scope>
    <scope>SUBUNIT</scope>
    <scope>INDUCTION BY PYOCYANINE</scope>
    <scope>MUTAGENESIS OF ARG-31; ASP-35; TYR-40; ARG-67; ARG-86 AND TYR-270</scope>
</reference>
<comment type="function">
    <text evidence="2 3 4 5 6 7">Transcriptional regulator (PubMed:23687276, PubMed:23935054, PubMed:24612375). Responsive to the second messenger cyclic di-GMP (c-di-GMP) and to the virulence factor pyocyanine, which both enhance gene expression and promoter DNA binding of BrlR (PubMed:24612375, PubMed:29967320). Activates expression of operons encoding the multidrug efflux pumps MexAB-OprM and MexEF-OprN and several ABC transport systems, acting by direct binding to their respective promoters (PubMed:23687276, PubMed:24612375, PubMed:29180529). Also acts as a repressor of the two component regulatory system, PhoPQ (PubMed:23935054). Binds to promoter of its own gene (PubMed:24612375). Contributes to the antimicrobial tolerance exhibited by biofilms, acting, at least in part, by activating expression of multidrug efflux pumps and ABC transporters (PubMed:22730129, PubMed:23687276, PubMed:29180529).</text>
</comment>
<comment type="subunit">
    <text evidence="5 7 12">Monomer (PubMed:24612375). Homodimer; dimer formation enhanced in the presence of the second messenger, cyclic di-GMP (c-di-GMP) (PubMed:24612375, PubMed:29967320). Homotetramer; dimer of dimers, arranged in a head-to-tail fashion, which may reduce DNA-binding ability (PubMed:29967320). Conformational changes upon binding c-di-GMP or pyocyanine may facilitate DNA binding (PubMed:29967320).</text>
</comment>
<comment type="induction">
    <text evidence="2 5 7">Up-regulated by the second messenger cyclic di-GMP (c-di-GMP), which has been associated with controlling the transition between a motile and biofilm lifestyle (PubMed:24612375). Up-regulated by the virulence factor pyocyanine (PubMed:29967320). Expressed during biofilm formation, under flowing media conditions, after 6 h post initial attachment and detectable for at least one to six days (PubMed:22730129, PubMed:24612375). Not detectable prior to 6 h, in the earliest phase of initial, reversible, cell-surface attachment during biofilm formation (PubMed:24612375). Expression not detectable when grown in suspension, also known as free-floating or planktonic growth (PubMed:22730129). Expression not detectable in biofilms grown under stationary culture media conditions (PubMed:22730129).</text>
</comment>
<comment type="disruption phenotype">
    <text evidence="2 3 4 6 8">Abolishes high-level biofilm-specific drug tolerance, including tolerance of tobramycin, norfloxacin, trimethoprim, tetracycline and kanamycin (PubMed:22730129, PubMed:23935054). Biofilms are more susceptible to treatment with hydrogen peroxide (PubMed:22730129). Intracellular norfloxacin accumulation increases in mutant biofilms (PubMed:29180529). Normal attachment, formation and architecture of biofilms (PubMed:22730129). Growth in suspension, known as planktonic growth, is normal in the absence of antimicrobial agents (PubMed:22730129). Increases resistance against colistin, in either planktonic or biofilm growth conditions (PubMed:23935054). No differences in colony morphology or Psl polysaccharide production (PubMed:22730129). No differences in motility, such as swimming, swarming, or twitching (PubMed:22730129). No effect on the susceptibility of planktonic cells to tobramycin or hydrogen peroxide (PubMed:22730129). Greater than 9-fold decrease in the transcripts of the ABC-type transport system operon PA1874-PA1877 (PubMed:29180529). Decreases expression of genes involved in carbon catabolism and metabolism, secreted factors, and type I to III secretion (PubMed:23687276). Increases expression of the arnBCADTEF operon (PubMed:23935054).</text>
</comment>
<comment type="miscellaneous">
    <text evidence="5 8">Biofilm bacteria exhibit a profound tolerance of various antimicrobial agents, rendering biofilm cells 10- to 1,000-fold less susceptible than the same bacteria grown in a planktonic (free-floating) culture (PubMed:22730129). Second messenger cyclic di-GMP (c-di-GMP) has been associated with controlling the transition between a motile and biofilm lifestyle; increased levels contribute to resistance of exponential-phase planktonic cells to tobramycin and norfloxacin (PubMed:24612375).</text>
</comment>
<keyword id="KW-0002">3D-structure</keyword>
<keyword id="KW-0010">Activator</keyword>
<keyword id="KW-0238">DNA-binding</keyword>
<keyword id="KW-0547">Nucleotide-binding</keyword>
<keyword id="KW-1185">Reference proteome</keyword>
<keyword id="KW-0678">Repressor</keyword>
<keyword id="KW-0804">Transcription</keyword>
<keyword id="KW-0805">Transcription regulation</keyword>